<organism>
    <name type="scientific">Nocardia farcinica (strain IFM 10152)</name>
    <dbReference type="NCBI Taxonomy" id="247156"/>
    <lineage>
        <taxon>Bacteria</taxon>
        <taxon>Bacillati</taxon>
        <taxon>Actinomycetota</taxon>
        <taxon>Actinomycetes</taxon>
        <taxon>Mycobacteriales</taxon>
        <taxon>Nocardiaceae</taxon>
        <taxon>Nocardia</taxon>
    </lineage>
</organism>
<reference key="1">
    <citation type="journal article" date="2004" name="Proc. Natl. Acad. Sci. U.S.A.">
        <title>The complete genomic sequence of Nocardia farcinica IFM 10152.</title>
        <authorList>
            <person name="Ishikawa J."/>
            <person name="Yamashita A."/>
            <person name="Mikami Y."/>
            <person name="Hoshino Y."/>
            <person name="Kurita H."/>
            <person name="Hotta K."/>
            <person name="Shiba T."/>
            <person name="Hattori M."/>
        </authorList>
    </citation>
    <scope>NUCLEOTIDE SEQUENCE [LARGE SCALE GENOMIC DNA]</scope>
    <source>
        <strain>IFM 10152</strain>
    </source>
</reference>
<feature type="chain" id="PRO_0000126921" description="Phenylalanine--tRNA ligase beta subunit">
    <location>
        <begin position="1"/>
        <end position="834"/>
    </location>
</feature>
<feature type="domain" description="tRNA-binding" evidence="1">
    <location>
        <begin position="48"/>
        <end position="159"/>
    </location>
</feature>
<feature type="domain" description="B5" evidence="1">
    <location>
        <begin position="411"/>
        <end position="492"/>
    </location>
</feature>
<feature type="domain" description="FDX-ACB" evidence="1">
    <location>
        <begin position="740"/>
        <end position="833"/>
    </location>
</feature>
<feature type="binding site" evidence="1">
    <location>
        <position position="470"/>
    </location>
    <ligand>
        <name>Mg(2+)</name>
        <dbReference type="ChEBI" id="CHEBI:18420"/>
        <note>shared with alpha subunit</note>
    </ligand>
</feature>
<feature type="binding site" evidence="1">
    <location>
        <position position="476"/>
    </location>
    <ligand>
        <name>Mg(2+)</name>
        <dbReference type="ChEBI" id="CHEBI:18420"/>
        <note>shared with alpha subunit</note>
    </ligand>
</feature>
<feature type="binding site" evidence="1">
    <location>
        <position position="479"/>
    </location>
    <ligand>
        <name>Mg(2+)</name>
        <dbReference type="ChEBI" id="CHEBI:18420"/>
        <note>shared with alpha subunit</note>
    </ligand>
</feature>
<feature type="binding site" evidence="1">
    <location>
        <position position="480"/>
    </location>
    <ligand>
        <name>Mg(2+)</name>
        <dbReference type="ChEBI" id="CHEBI:18420"/>
        <note>shared with alpha subunit</note>
    </ligand>
</feature>
<dbReference type="EC" id="6.1.1.20" evidence="1"/>
<dbReference type="EMBL" id="AP006618">
    <property type="protein sequence ID" value="BAD56765.1"/>
    <property type="molecule type" value="Genomic_DNA"/>
</dbReference>
<dbReference type="RefSeq" id="WP_011208450.1">
    <property type="nucleotide sequence ID" value="NC_006361.1"/>
</dbReference>
<dbReference type="SMR" id="Q5YYH6"/>
<dbReference type="STRING" id="247156.NFA_19190"/>
<dbReference type="GeneID" id="61132701"/>
<dbReference type="KEGG" id="nfa:NFA_19190"/>
<dbReference type="eggNOG" id="COG0072">
    <property type="taxonomic scope" value="Bacteria"/>
</dbReference>
<dbReference type="eggNOG" id="COG0073">
    <property type="taxonomic scope" value="Bacteria"/>
</dbReference>
<dbReference type="HOGENOM" id="CLU_016891_0_0_11"/>
<dbReference type="OrthoDB" id="9805455at2"/>
<dbReference type="Proteomes" id="UP000006820">
    <property type="component" value="Chromosome"/>
</dbReference>
<dbReference type="GO" id="GO:0009328">
    <property type="term" value="C:phenylalanine-tRNA ligase complex"/>
    <property type="evidence" value="ECO:0007669"/>
    <property type="project" value="TreeGrafter"/>
</dbReference>
<dbReference type="GO" id="GO:0005524">
    <property type="term" value="F:ATP binding"/>
    <property type="evidence" value="ECO:0007669"/>
    <property type="project" value="UniProtKB-UniRule"/>
</dbReference>
<dbReference type="GO" id="GO:0000287">
    <property type="term" value="F:magnesium ion binding"/>
    <property type="evidence" value="ECO:0007669"/>
    <property type="project" value="UniProtKB-UniRule"/>
</dbReference>
<dbReference type="GO" id="GO:0004826">
    <property type="term" value="F:phenylalanine-tRNA ligase activity"/>
    <property type="evidence" value="ECO:0007669"/>
    <property type="project" value="UniProtKB-UniRule"/>
</dbReference>
<dbReference type="GO" id="GO:0000049">
    <property type="term" value="F:tRNA binding"/>
    <property type="evidence" value="ECO:0007669"/>
    <property type="project" value="UniProtKB-KW"/>
</dbReference>
<dbReference type="GO" id="GO:0006432">
    <property type="term" value="P:phenylalanyl-tRNA aminoacylation"/>
    <property type="evidence" value="ECO:0007669"/>
    <property type="project" value="UniProtKB-UniRule"/>
</dbReference>
<dbReference type="CDD" id="cd00769">
    <property type="entry name" value="PheRS_beta_core"/>
    <property type="match status" value="1"/>
</dbReference>
<dbReference type="CDD" id="cd02796">
    <property type="entry name" value="tRNA_bind_bactPheRS"/>
    <property type="match status" value="1"/>
</dbReference>
<dbReference type="FunFam" id="2.40.50.140:FF:000045">
    <property type="entry name" value="Phenylalanine--tRNA ligase beta subunit"/>
    <property type="match status" value="1"/>
</dbReference>
<dbReference type="FunFam" id="3.30.70.380:FF:000001">
    <property type="entry name" value="Phenylalanine--tRNA ligase beta subunit"/>
    <property type="match status" value="1"/>
</dbReference>
<dbReference type="FunFam" id="3.30.930.10:FF:000130">
    <property type="entry name" value="Phenylalanine--tRNA ligase beta subunit"/>
    <property type="match status" value="1"/>
</dbReference>
<dbReference type="FunFam" id="3.50.40.10:FF:000001">
    <property type="entry name" value="Phenylalanine--tRNA ligase beta subunit"/>
    <property type="match status" value="1"/>
</dbReference>
<dbReference type="Gene3D" id="3.30.56.10">
    <property type="match status" value="2"/>
</dbReference>
<dbReference type="Gene3D" id="3.30.930.10">
    <property type="entry name" value="Bira Bifunctional Protein, Domain 2"/>
    <property type="match status" value="1"/>
</dbReference>
<dbReference type="Gene3D" id="3.30.70.380">
    <property type="entry name" value="Ferrodoxin-fold anticodon-binding domain"/>
    <property type="match status" value="1"/>
</dbReference>
<dbReference type="Gene3D" id="2.40.50.140">
    <property type="entry name" value="Nucleic acid-binding proteins"/>
    <property type="match status" value="1"/>
</dbReference>
<dbReference type="Gene3D" id="3.50.40.10">
    <property type="entry name" value="Phenylalanyl-trna Synthetase, Chain B, domain 3"/>
    <property type="match status" value="1"/>
</dbReference>
<dbReference type="HAMAP" id="MF_00283">
    <property type="entry name" value="Phe_tRNA_synth_beta1"/>
    <property type="match status" value="1"/>
</dbReference>
<dbReference type="InterPro" id="IPR045864">
    <property type="entry name" value="aa-tRNA-synth_II/BPL/LPL"/>
</dbReference>
<dbReference type="InterPro" id="IPR005146">
    <property type="entry name" value="B3/B4_tRNA-bd"/>
</dbReference>
<dbReference type="InterPro" id="IPR009061">
    <property type="entry name" value="DNA-bd_dom_put_sf"/>
</dbReference>
<dbReference type="InterPro" id="IPR005121">
    <property type="entry name" value="Fdx_antiC-bd"/>
</dbReference>
<dbReference type="InterPro" id="IPR036690">
    <property type="entry name" value="Fdx_antiC-bd_sf"/>
</dbReference>
<dbReference type="InterPro" id="IPR012340">
    <property type="entry name" value="NA-bd_OB-fold"/>
</dbReference>
<dbReference type="InterPro" id="IPR045060">
    <property type="entry name" value="Phe-tRNA-ligase_IIc_bsu"/>
</dbReference>
<dbReference type="InterPro" id="IPR004532">
    <property type="entry name" value="Phe-tRNA-ligase_IIc_bsu_bact"/>
</dbReference>
<dbReference type="InterPro" id="IPR020825">
    <property type="entry name" value="Phe-tRNA_synthase-like_B3/B4"/>
</dbReference>
<dbReference type="InterPro" id="IPR041616">
    <property type="entry name" value="PheRS_beta_core"/>
</dbReference>
<dbReference type="InterPro" id="IPR002547">
    <property type="entry name" value="tRNA-bd_dom"/>
</dbReference>
<dbReference type="InterPro" id="IPR033714">
    <property type="entry name" value="tRNA_bind_bactPheRS"/>
</dbReference>
<dbReference type="InterPro" id="IPR005147">
    <property type="entry name" value="tRNA_synthase_B5-dom"/>
</dbReference>
<dbReference type="NCBIfam" id="TIGR00472">
    <property type="entry name" value="pheT_bact"/>
    <property type="match status" value="1"/>
</dbReference>
<dbReference type="PANTHER" id="PTHR10947:SF0">
    <property type="entry name" value="PHENYLALANINE--TRNA LIGASE BETA SUBUNIT"/>
    <property type="match status" value="1"/>
</dbReference>
<dbReference type="PANTHER" id="PTHR10947">
    <property type="entry name" value="PHENYLALANYL-TRNA SYNTHETASE BETA CHAIN AND LEUCINE-RICH REPEAT-CONTAINING PROTEIN 47"/>
    <property type="match status" value="1"/>
</dbReference>
<dbReference type="Pfam" id="PF03483">
    <property type="entry name" value="B3_4"/>
    <property type="match status" value="1"/>
</dbReference>
<dbReference type="Pfam" id="PF03484">
    <property type="entry name" value="B5"/>
    <property type="match status" value="1"/>
</dbReference>
<dbReference type="Pfam" id="PF03147">
    <property type="entry name" value="FDX-ACB"/>
    <property type="match status" value="1"/>
</dbReference>
<dbReference type="Pfam" id="PF01588">
    <property type="entry name" value="tRNA_bind"/>
    <property type="match status" value="1"/>
</dbReference>
<dbReference type="Pfam" id="PF17759">
    <property type="entry name" value="tRNA_synthFbeta"/>
    <property type="match status" value="1"/>
</dbReference>
<dbReference type="SMART" id="SM00873">
    <property type="entry name" value="B3_4"/>
    <property type="match status" value="1"/>
</dbReference>
<dbReference type="SMART" id="SM00874">
    <property type="entry name" value="B5"/>
    <property type="match status" value="1"/>
</dbReference>
<dbReference type="SMART" id="SM00896">
    <property type="entry name" value="FDX-ACB"/>
    <property type="match status" value="1"/>
</dbReference>
<dbReference type="SUPFAM" id="SSF54991">
    <property type="entry name" value="Anticodon-binding domain of PheRS"/>
    <property type="match status" value="1"/>
</dbReference>
<dbReference type="SUPFAM" id="SSF55681">
    <property type="entry name" value="Class II aaRS and biotin synthetases"/>
    <property type="match status" value="1"/>
</dbReference>
<dbReference type="SUPFAM" id="SSF50249">
    <property type="entry name" value="Nucleic acid-binding proteins"/>
    <property type="match status" value="1"/>
</dbReference>
<dbReference type="SUPFAM" id="SSF56037">
    <property type="entry name" value="PheT/TilS domain"/>
    <property type="match status" value="1"/>
</dbReference>
<dbReference type="SUPFAM" id="SSF46955">
    <property type="entry name" value="Putative DNA-binding domain"/>
    <property type="match status" value="1"/>
</dbReference>
<dbReference type="PROSITE" id="PS51483">
    <property type="entry name" value="B5"/>
    <property type="match status" value="1"/>
</dbReference>
<dbReference type="PROSITE" id="PS51447">
    <property type="entry name" value="FDX_ACB"/>
    <property type="match status" value="1"/>
</dbReference>
<dbReference type="PROSITE" id="PS50886">
    <property type="entry name" value="TRBD"/>
    <property type="match status" value="1"/>
</dbReference>
<sequence>MRVAQSWLTEIIERTNAGWSVTPEELDAGFVRVGLEVEEVDRLERVGGDIERPLVVGRVAEITELTEFKKPIRFCKVDVGAPELQEIICGARNFAVGDLVVVVLPGGVLPGGFRITSRKTYGHVSNGMICSVAELGIGKDHSGILVLEPGTAEPGTDANELLGLDDTVIELNITPDRGYCFSVRGLARELACGFDLEYLDPAVRTLPEDAAEAWPITIEPASQCTRFAARRVTGIDPNAVSPWWLQRRLLLSGVRPISPAVDVTNYVMLELGQPLHAFDAAKLSGGLVVRTAKPGEKLRTLDDTERTLDAEDVVIADDSGAVSLAGIMGGASTEVGEGTTDVLLEAATWNPLLVYRTARRHKLVSEAGKRYERVVDPEINVAALDRAATLLAEIAGGTVEPVLSDVRVPTPAPEPIRMDIDLPDRVAGVAYPTGTAARRLAQIGCHVEVSVDEESGHGQLVVTPPSWRPDLAQPADLVEEVLRLEGLEQIPSVVPTAPAGRGLTPEQRRRRAVSRALAFAGGVEVPPPVFLPAGVFDTWGLDADDPRRTTTRVLNPLDVERAELATTLLPGLLEVAQRNISRGARDLTLYGIAQVVLPTGDTKPVAPLPVDRRPTDEQIAELLGSLPDQPVHVAAVLTGRREPRGPWGPGRQAEAADAFALVDAVADAAGVVIERRPAAYLPWHPGRCAELVVEGRVVGYAGELHPAVLERSGLPARTCALELDLDALPLRESRPVPVVSPFPAVLQDVSVSVSKSVAAAAVESALRSGGGELLEDIALFDVYEGAQAGEGRKSLTYALRFRAPDRTLTEDEASAARDAAVAAAADAVGAVLRG</sequence>
<comment type="catalytic activity">
    <reaction evidence="1">
        <text>tRNA(Phe) + L-phenylalanine + ATP = L-phenylalanyl-tRNA(Phe) + AMP + diphosphate + H(+)</text>
        <dbReference type="Rhea" id="RHEA:19413"/>
        <dbReference type="Rhea" id="RHEA-COMP:9668"/>
        <dbReference type="Rhea" id="RHEA-COMP:9699"/>
        <dbReference type="ChEBI" id="CHEBI:15378"/>
        <dbReference type="ChEBI" id="CHEBI:30616"/>
        <dbReference type="ChEBI" id="CHEBI:33019"/>
        <dbReference type="ChEBI" id="CHEBI:58095"/>
        <dbReference type="ChEBI" id="CHEBI:78442"/>
        <dbReference type="ChEBI" id="CHEBI:78531"/>
        <dbReference type="ChEBI" id="CHEBI:456215"/>
        <dbReference type="EC" id="6.1.1.20"/>
    </reaction>
</comment>
<comment type="cofactor">
    <cofactor evidence="1">
        <name>Mg(2+)</name>
        <dbReference type="ChEBI" id="CHEBI:18420"/>
    </cofactor>
    <text evidence="1">Binds 2 magnesium ions per tetramer.</text>
</comment>
<comment type="subunit">
    <text evidence="1">Tetramer of two alpha and two beta subunits.</text>
</comment>
<comment type="subcellular location">
    <subcellularLocation>
        <location evidence="1">Cytoplasm</location>
    </subcellularLocation>
</comment>
<comment type="similarity">
    <text evidence="1">Belongs to the phenylalanyl-tRNA synthetase beta subunit family. Type 1 subfamily.</text>
</comment>
<evidence type="ECO:0000255" key="1">
    <source>
        <dbReference type="HAMAP-Rule" id="MF_00283"/>
    </source>
</evidence>
<keyword id="KW-0030">Aminoacyl-tRNA synthetase</keyword>
<keyword id="KW-0067">ATP-binding</keyword>
<keyword id="KW-0963">Cytoplasm</keyword>
<keyword id="KW-0436">Ligase</keyword>
<keyword id="KW-0460">Magnesium</keyword>
<keyword id="KW-0479">Metal-binding</keyword>
<keyword id="KW-0547">Nucleotide-binding</keyword>
<keyword id="KW-0648">Protein biosynthesis</keyword>
<keyword id="KW-1185">Reference proteome</keyword>
<keyword id="KW-0694">RNA-binding</keyword>
<keyword id="KW-0820">tRNA-binding</keyword>
<accession>Q5YYH6</accession>
<proteinExistence type="inferred from homology"/>
<name>SYFB_NOCFA</name>
<protein>
    <recommendedName>
        <fullName evidence="1">Phenylalanine--tRNA ligase beta subunit</fullName>
        <ecNumber evidence="1">6.1.1.20</ecNumber>
    </recommendedName>
    <alternativeName>
        <fullName evidence="1">Phenylalanyl-tRNA synthetase beta subunit</fullName>
        <shortName evidence="1">PheRS</shortName>
    </alternativeName>
</protein>
<gene>
    <name evidence="1" type="primary">pheT</name>
    <name type="ordered locus">NFA_19190</name>
</gene>